<accession>Q8YJD9</accession>
<comment type="function">
    <text evidence="1">Site-specific tyrosine recombinase, which acts by catalyzing the cutting and rejoining of the recombining DNA molecules. The XerC-XerD complex is essential to convert dimers of the bacterial chromosome into monomers to permit their segregation at cell division. It also contributes to the segregational stability of plasmids.</text>
</comment>
<comment type="subunit">
    <text evidence="1">Forms a cyclic heterotetrameric complex composed of two molecules of XerC and two molecules of XerD.</text>
</comment>
<comment type="subcellular location">
    <subcellularLocation>
        <location evidence="1">Cytoplasm</location>
    </subcellularLocation>
</comment>
<comment type="similarity">
    <text evidence="1">Belongs to the 'phage' integrase family. XerC subfamily.</text>
</comment>
<reference key="1">
    <citation type="journal article" date="2002" name="Proc. Natl. Acad. Sci. U.S.A.">
        <title>The genome sequence of the facultative intracellular pathogen Brucella melitensis.</title>
        <authorList>
            <person name="DelVecchio V.G."/>
            <person name="Kapatral V."/>
            <person name="Redkar R.J."/>
            <person name="Patra G."/>
            <person name="Mujer C."/>
            <person name="Los T."/>
            <person name="Ivanova N."/>
            <person name="Anderson I."/>
            <person name="Bhattacharyya A."/>
            <person name="Lykidis A."/>
            <person name="Reznik G."/>
            <person name="Jablonski L."/>
            <person name="Larsen N."/>
            <person name="D'Souza M."/>
            <person name="Bernal A."/>
            <person name="Mazur M."/>
            <person name="Goltsman E."/>
            <person name="Selkov E."/>
            <person name="Elzer P.H."/>
            <person name="Hagius S."/>
            <person name="O'Callaghan D."/>
            <person name="Letesson J.-J."/>
            <person name="Haselkorn R."/>
            <person name="Kyrpides N.C."/>
            <person name="Overbeek R."/>
        </authorList>
    </citation>
    <scope>NUCLEOTIDE SEQUENCE [LARGE SCALE GENOMIC DNA]</scope>
    <source>
        <strain>ATCC 23456 / CCUG 17765 / NCTC 10094 / 16M</strain>
    </source>
</reference>
<proteinExistence type="inferred from homology"/>
<keyword id="KW-0131">Cell cycle</keyword>
<keyword id="KW-0132">Cell division</keyword>
<keyword id="KW-0159">Chromosome partition</keyword>
<keyword id="KW-0963">Cytoplasm</keyword>
<keyword id="KW-0229">DNA integration</keyword>
<keyword id="KW-0233">DNA recombination</keyword>
<keyword id="KW-0238">DNA-binding</keyword>
<dbReference type="EMBL" id="AE008917">
    <property type="protein sequence ID" value="AAL51329.1"/>
    <property type="molecule type" value="Genomic_DNA"/>
</dbReference>
<dbReference type="PIR" id="AF3270">
    <property type="entry name" value="AF3270"/>
</dbReference>
<dbReference type="RefSeq" id="WP_004684445.1">
    <property type="nucleotide sequence ID" value="NC_003317.1"/>
</dbReference>
<dbReference type="SMR" id="Q8YJD9"/>
<dbReference type="GeneID" id="29594142"/>
<dbReference type="KEGG" id="bme:BMEI0147"/>
<dbReference type="KEGG" id="bmel:DK63_1288"/>
<dbReference type="PATRIC" id="fig|224914.52.peg.1359"/>
<dbReference type="eggNOG" id="COG4973">
    <property type="taxonomic scope" value="Bacteria"/>
</dbReference>
<dbReference type="PhylomeDB" id="Q8YJD9"/>
<dbReference type="Proteomes" id="UP000000419">
    <property type="component" value="Chromosome I"/>
</dbReference>
<dbReference type="GO" id="GO:0005737">
    <property type="term" value="C:cytoplasm"/>
    <property type="evidence" value="ECO:0007669"/>
    <property type="project" value="UniProtKB-SubCell"/>
</dbReference>
<dbReference type="GO" id="GO:0003677">
    <property type="term" value="F:DNA binding"/>
    <property type="evidence" value="ECO:0007669"/>
    <property type="project" value="UniProtKB-KW"/>
</dbReference>
<dbReference type="GO" id="GO:0009037">
    <property type="term" value="F:tyrosine-based site-specific recombinase activity"/>
    <property type="evidence" value="ECO:0007669"/>
    <property type="project" value="UniProtKB-UniRule"/>
</dbReference>
<dbReference type="GO" id="GO:0051301">
    <property type="term" value="P:cell division"/>
    <property type="evidence" value="ECO:0007669"/>
    <property type="project" value="UniProtKB-KW"/>
</dbReference>
<dbReference type="GO" id="GO:0007059">
    <property type="term" value="P:chromosome segregation"/>
    <property type="evidence" value="ECO:0007669"/>
    <property type="project" value="UniProtKB-UniRule"/>
</dbReference>
<dbReference type="GO" id="GO:0006313">
    <property type="term" value="P:DNA transposition"/>
    <property type="evidence" value="ECO:0007669"/>
    <property type="project" value="UniProtKB-UniRule"/>
</dbReference>
<dbReference type="Gene3D" id="1.10.150.130">
    <property type="match status" value="1"/>
</dbReference>
<dbReference type="Gene3D" id="1.10.443.10">
    <property type="entry name" value="Intergrase catalytic core"/>
    <property type="match status" value="1"/>
</dbReference>
<dbReference type="HAMAP" id="MF_01808">
    <property type="entry name" value="Recomb_XerC_XerD"/>
    <property type="match status" value="1"/>
</dbReference>
<dbReference type="InterPro" id="IPR044068">
    <property type="entry name" value="CB"/>
</dbReference>
<dbReference type="InterPro" id="IPR011010">
    <property type="entry name" value="DNA_brk_join_enz"/>
</dbReference>
<dbReference type="InterPro" id="IPR013762">
    <property type="entry name" value="Integrase-like_cat_sf"/>
</dbReference>
<dbReference type="InterPro" id="IPR002104">
    <property type="entry name" value="Integrase_catalytic"/>
</dbReference>
<dbReference type="InterPro" id="IPR010998">
    <property type="entry name" value="Integrase_recombinase_N"/>
</dbReference>
<dbReference type="InterPro" id="IPR004107">
    <property type="entry name" value="Integrase_SAM-like_N"/>
</dbReference>
<dbReference type="InterPro" id="IPR023009">
    <property type="entry name" value="Tyrosine_recombinase_XerC/XerD"/>
</dbReference>
<dbReference type="InterPro" id="IPR050090">
    <property type="entry name" value="Tyrosine_recombinase_XerCD"/>
</dbReference>
<dbReference type="PANTHER" id="PTHR30349">
    <property type="entry name" value="PHAGE INTEGRASE-RELATED"/>
    <property type="match status" value="1"/>
</dbReference>
<dbReference type="PANTHER" id="PTHR30349:SF90">
    <property type="entry name" value="TYROSINE RECOMBINASE XERD"/>
    <property type="match status" value="1"/>
</dbReference>
<dbReference type="Pfam" id="PF02899">
    <property type="entry name" value="Phage_int_SAM_1"/>
    <property type="match status" value="1"/>
</dbReference>
<dbReference type="Pfam" id="PF00589">
    <property type="entry name" value="Phage_integrase"/>
    <property type="match status" value="1"/>
</dbReference>
<dbReference type="SUPFAM" id="SSF56349">
    <property type="entry name" value="DNA breaking-rejoining enzymes"/>
    <property type="match status" value="1"/>
</dbReference>
<dbReference type="PROSITE" id="PS51900">
    <property type="entry name" value="CB"/>
    <property type="match status" value="1"/>
</dbReference>
<dbReference type="PROSITE" id="PS51898">
    <property type="entry name" value="TYR_RECOMBINASE"/>
    <property type="match status" value="1"/>
</dbReference>
<gene>
    <name evidence="1" type="primary">xerC</name>
    <name type="ordered locus">BMEI0147</name>
</gene>
<sequence>MATNSEFLIPARADLAAAREEWLKSLKTMRRLSDNTLIAYERDTRQFLQFLTGHLGEPPSLKEIGNLRIADLRSFLANRRNDGAGARTLGRGLAGVRSLLRHLEKRGLVNAAGASAMRAPRQPKSLPKPLTADDARRVVSADGQMAEEPWIAARNAAVLTLLYGCGLRISEALGLSGDALSDPSARSMTITGKGSKTRLVPLLPAVHKAVAQYRALCPFDLSAGQLLFRGAKGGPLHAAIIQREMQKLRAGLGLPDSATPHALRHSFATHLLGRGGDLRTIQELLGHASLSTTQVYTGVDTQRLLEVYDKTHPRA</sequence>
<name>XERC_BRUME</name>
<organism>
    <name type="scientific">Brucella melitensis biotype 1 (strain ATCC 23456 / CCUG 17765 / NCTC 10094 / 16M)</name>
    <dbReference type="NCBI Taxonomy" id="224914"/>
    <lineage>
        <taxon>Bacteria</taxon>
        <taxon>Pseudomonadati</taxon>
        <taxon>Pseudomonadota</taxon>
        <taxon>Alphaproteobacteria</taxon>
        <taxon>Hyphomicrobiales</taxon>
        <taxon>Brucellaceae</taxon>
        <taxon>Brucella/Ochrobactrum group</taxon>
        <taxon>Brucella</taxon>
    </lineage>
</organism>
<protein>
    <recommendedName>
        <fullName evidence="1">Tyrosine recombinase XerC</fullName>
    </recommendedName>
</protein>
<evidence type="ECO:0000255" key="1">
    <source>
        <dbReference type="HAMAP-Rule" id="MF_01808"/>
    </source>
</evidence>
<evidence type="ECO:0000255" key="2">
    <source>
        <dbReference type="PROSITE-ProRule" id="PRU01246"/>
    </source>
</evidence>
<evidence type="ECO:0000255" key="3">
    <source>
        <dbReference type="PROSITE-ProRule" id="PRU01248"/>
    </source>
</evidence>
<feature type="chain" id="PRO_0000095286" description="Tyrosine recombinase XerC">
    <location>
        <begin position="1"/>
        <end position="315"/>
    </location>
</feature>
<feature type="domain" description="Core-binding (CB)" evidence="3">
    <location>
        <begin position="13"/>
        <end position="104"/>
    </location>
</feature>
<feature type="domain" description="Tyr recombinase" evidence="2">
    <location>
        <begin position="125"/>
        <end position="309"/>
    </location>
</feature>
<feature type="active site" evidence="1">
    <location>
        <position position="168"/>
    </location>
</feature>
<feature type="active site" evidence="1">
    <location>
        <position position="193"/>
    </location>
</feature>
<feature type="active site" evidence="1">
    <location>
        <position position="261"/>
    </location>
</feature>
<feature type="active site" evidence="1">
    <location>
        <position position="264"/>
    </location>
</feature>
<feature type="active site" evidence="1">
    <location>
        <position position="287"/>
    </location>
</feature>
<feature type="active site" description="O-(3'-phospho-DNA)-tyrosine intermediate" evidence="1">
    <location>
        <position position="296"/>
    </location>
</feature>